<name>AB6C_ARATH</name>
<comment type="function">
    <text evidence="1">Pump for glutathione S-conjugates.</text>
</comment>
<comment type="catalytic activity">
    <reaction>
        <text>ATP + H2O + xenobioticSide 1 = ADP + phosphate + xenobioticSide 2.</text>
        <dbReference type="EC" id="7.6.2.2"/>
    </reaction>
</comment>
<comment type="subcellular location">
    <subcellularLocation>
        <location evidence="3">Membrane</location>
        <topology evidence="3">Multi-pass membrane protein</topology>
    </subcellularLocation>
</comment>
<comment type="tissue specificity">
    <text evidence="5">Ubiquitous.</text>
</comment>
<comment type="induction">
    <text evidence="5">By salicylic acid (SA).</text>
</comment>
<comment type="similarity">
    <text evidence="6">Belongs to the ABC transporter superfamily. ABCC family. Conjugate transporter (TC 3.A.1.208) subfamily.</text>
</comment>
<comment type="sequence caution" evidence="6">
    <conflict type="erroneous gene model prediction">
        <sequence resource="EMBL-CDS" id="BAB01400"/>
    </conflict>
</comment>
<organism>
    <name type="scientific">Arabidopsis thaliana</name>
    <name type="common">Mouse-ear cress</name>
    <dbReference type="NCBI Taxonomy" id="3702"/>
    <lineage>
        <taxon>Eukaryota</taxon>
        <taxon>Viridiplantae</taxon>
        <taxon>Streptophyta</taxon>
        <taxon>Embryophyta</taxon>
        <taxon>Tracheophyta</taxon>
        <taxon>Spermatophyta</taxon>
        <taxon>Magnoliopsida</taxon>
        <taxon>eudicotyledons</taxon>
        <taxon>Gunneridae</taxon>
        <taxon>Pentapetalae</taxon>
        <taxon>rosids</taxon>
        <taxon>malvids</taxon>
        <taxon>Brassicales</taxon>
        <taxon>Brassicaceae</taxon>
        <taxon>Camelineae</taxon>
        <taxon>Arabidopsis</taxon>
    </lineage>
</organism>
<protein>
    <recommendedName>
        <fullName>ABC transporter C family member 6</fullName>
        <shortName>ABC transporter ABCC.6</shortName>
        <shortName>AtABCC6</shortName>
        <ecNumber>7.6.2.2</ecNumber>
    </recommendedName>
    <alternativeName>
        <fullName>ATP-energized glutathione S-conjugate pump 8</fullName>
    </alternativeName>
    <alternativeName>
        <fullName>Glutathione S-conjugate-transporting ATPase 8</fullName>
    </alternativeName>
    <alternativeName>
        <fullName>Multidrug resistance-associated protein 8</fullName>
    </alternativeName>
</protein>
<accession>Q8VZZ4</accession>
<accession>Q9LK63</accession>
<gene>
    <name type="primary">ABCC6</name>
    <name type="synonym">MRP6</name>
    <name type="synonym">MRP8</name>
    <name type="ordered locus">At3g13090</name>
    <name type="ORF">MJG19.4</name>
</gene>
<keyword id="KW-0067">ATP-binding</keyword>
<keyword id="KW-0472">Membrane</keyword>
<keyword id="KW-0547">Nucleotide-binding</keyword>
<keyword id="KW-1185">Reference proteome</keyword>
<keyword id="KW-0677">Repeat</keyword>
<keyword id="KW-1278">Translocase</keyword>
<keyword id="KW-0812">Transmembrane</keyword>
<keyword id="KW-1133">Transmembrane helix</keyword>
<keyword id="KW-0813">Transport</keyword>
<sequence>MENPIDSLLLQPIYLSVLSFFLNLVLLLILFGSWLFKKRVACEDTDAIMNEEFKHISFSYNKLVLICCVSLSVFYSVLSLLSCLHWHTNGWPFLDLLLAALTWGSISVYLFGRYTNSCEQKVLFLLRVWWVFFFVVSCYHLVVDFVLYKKQEMVSVHFVISDLVGVCAGLFLCCSCLWKKGEGERIDLLKEPLLSSAESSDNEEVTAPFSKAGILSRMSFSWMSPLITLGNEKIIDIKDVPQLDRSDTTESLFWIFRSKLEWDDGERRITTFKLIKALFLSVWRDIVLSALLAFVYTVSCYVAPYLMDNFVQYLNGNRQYKNQGYVLVTTFFVAKLVECQTQRQWFFRGQKAGLGMRSVLVSMIYEKGLTLPCHSKQGHTSGEIINLMAVDADRISAFSWFMHDPWILVLQVSLALWILYKSLGLGSIAAFPATILVMLANYPFAKLEEKFQSSLMKSKDNRMKKTSEVLLNMKILKLQGWEMKFLSKILELRHIEAGWLKKFVYNSSAINSVLWAAPSFISATAFGACLLLKIPLESGKILAALATFRILQGPIYKLPETISMIVQTKVSLNRIASFLCLDDLQQDVVGRLPSGSSEMAVEISNGTFSWDDSSPIPTLRDMNFKVSQGMNVAICGTVGSGKSSLLSSILGEVPKISGNLKVCGRKAYIAQSPWIQSGKVEENILFGKPMEREWYDRVLEACSLNKDLEILPFHDQTVIGERGINLSGGQKQRIQIARALYQDADIYLFDDPFSAVDAHTGSHLFKEVLLGLLRHKTVIYVTHQVEFLPEADLILVMKDGKITQAGKYHEILDSGTDFMELVGAHTEALATIDSCETGYASEKSTTDKENEVLHHKEKQENGSDNKPSGQLVQEEEREKGKVGFTVYKKYMALAYGGAVIPLILVVQVLFQLLSIGSNYWMTWVTPVSKDVEPPVSGFTLILVYVLLAVASSFCILIRALLVAMTGFKMATELFTQMHLRIFRASMSFFDATPMGRILNRASTDQSVADLRLPGQFAYVAIAAINILGIIGVIVQVAWQVLIVFIPVVAACAWYRQYYISAARELARLAGISRSPVVHHFSETLSGITTIRSFDQEPRFRGDIMRLSDCYSRLKFHSTGAMEWLCFRLELLSTFAFASSLVILVSAPEGVINPSLAGLAITYALNLNTLQATLIWTLCDLENKMISVERMLQYTNIPSEPPLVIETTRPEKSWPSRGEITICNLQVRYGPHLPMVLHGLTCTFPGGLKTGIVGRTGCGKSTLIQTLFRIVEPAAGEIRIDGINILSIGLHDLRSRLSIIPQDPTMFEGTIRSNLDPLEEYTDDQIWEALDNCQLGDEVRKKELKLDSPVSENGQNWSVGQRQLVCLGRVLLKRSKLLVLDEATASIDTATDNLIQETLRHHFADCTVITIAHRISSVIDSDMVLLLDQGLIKEHDSPARLLEDRSSLFSKLVAEYTTSSESKSKRS</sequence>
<dbReference type="EC" id="7.6.2.2"/>
<dbReference type="EMBL" id="AY052368">
    <property type="protein sequence ID" value="AAL14776.1"/>
    <property type="molecule type" value="mRNA"/>
</dbReference>
<dbReference type="EMBL" id="AP000375">
    <property type="protein sequence ID" value="BAB01400.1"/>
    <property type="status" value="ALT_SEQ"/>
    <property type="molecule type" value="Genomic_DNA"/>
</dbReference>
<dbReference type="EMBL" id="CP002686">
    <property type="protein sequence ID" value="AEE75295.1"/>
    <property type="molecule type" value="Genomic_DNA"/>
</dbReference>
<dbReference type="RefSeq" id="NP_187916.3">
    <property type="nucleotide sequence ID" value="NM_112148.4"/>
</dbReference>
<dbReference type="SMR" id="Q8VZZ4"/>
<dbReference type="BioGRID" id="5831">
    <property type="interactions" value="2"/>
</dbReference>
<dbReference type="STRING" id="3702.Q8VZZ4"/>
<dbReference type="TCDB" id="3.A.1.208.52">
    <property type="family name" value="the atp-binding cassette (abc) superfamily"/>
</dbReference>
<dbReference type="iPTMnet" id="Q8VZZ4"/>
<dbReference type="PaxDb" id="3702-AT3G13090.1"/>
<dbReference type="ProteomicsDB" id="244628"/>
<dbReference type="EnsemblPlants" id="AT3G13090.1">
    <property type="protein sequence ID" value="AT3G13090.1"/>
    <property type="gene ID" value="AT3G13090"/>
</dbReference>
<dbReference type="GeneID" id="820497"/>
<dbReference type="Gramene" id="AT3G13090.1">
    <property type="protein sequence ID" value="AT3G13090.1"/>
    <property type="gene ID" value="AT3G13090"/>
</dbReference>
<dbReference type="KEGG" id="ath:AT3G13090"/>
<dbReference type="Araport" id="AT3G13090"/>
<dbReference type="TAIR" id="AT3G13090">
    <property type="gene designation" value="ABCC6"/>
</dbReference>
<dbReference type="eggNOG" id="KOG0054">
    <property type="taxonomic scope" value="Eukaryota"/>
</dbReference>
<dbReference type="HOGENOM" id="CLU_000604_27_1_1"/>
<dbReference type="InParanoid" id="Q8VZZ4"/>
<dbReference type="OMA" id="APYLMDN"/>
<dbReference type="BioCyc" id="ARA:AT3G13090-MONOMER"/>
<dbReference type="PRO" id="PR:Q8VZZ4"/>
<dbReference type="Proteomes" id="UP000006548">
    <property type="component" value="Chromosome 3"/>
</dbReference>
<dbReference type="ExpressionAtlas" id="Q8VZZ4">
    <property type="expression patterns" value="baseline and differential"/>
</dbReference>
<dbReference type="GO" id="GO:0016020">
    <property type="term" value="C:membrane"/>
    <property type="evidence" value="ECO:0007669"/>
    <property type="project" value="UniProtKB-SubCell"/>
</dbReference>
<dbReference type="GO" id="GO:0000325">
    <property type="term" value="C:plant-type vacuole"/>
    <property type="evidence" value="ECO:0007005"/>
    <property type="project" value="TAIR"/>
</dbReference>
<dbReference type="GO" id="GO:0009506">
    <property type="term" value="C:plasmodesma"/>
    <property type="evidence" value="ECO:0007005"/>
    <property type="project" value="TAIR"/>
</dbReference>
<dbReference type="GO" id="GO:0008559">
    <property type="term" value="F:ABC-type xenobiotic transporter activity"/>
    <property type="evidence" value="ECO:0007669"/>
    <property type="project" value="UniProtKB-EC"/>
</dbReference>
<dbReference type="GO" id="GO:0005524">
    <property type="term" value="F:ATP binding"/>
    <property type="evidence" value="ECO:0007669"/>
    <property type="project" value="UniProtKB-KW"/>
</dbReference>
<dbReference type="GO" id="GO:0016887">
    <property type="term" value="F:ATP hydrolysis activity"/>
    <property type="evidence" value="ECO:0007669"/>
    <property type="project" value="InterPro"/>
</dbReference>
<dbReference type="GO" id="GO:0042626">
    <property type="term" value="F:ATPase-coupled transmembrane transporter activity"/>
    <property type="evidence" value="ECO:0000250"/>
    <property type="project" value="TAIR"/>
</dbReference>
<dbReference type="CDD" id="cd18579">
    <property type="entry name" value="ABC_6TM_ABCC_D1"/>
    <property type="match status" value="1"/>
</dbReference>
<dbReference type="CDD" id="cd18580">
    <property type="entry name" value="ABC_6TM_ABCC_D2"/>
    <property type="match status" value="1"/>
</dbReference>
<dbReference type="CDD" id="cd03250">
    <property type="entry name" value="ABCC_MRP_domain1"/>
    <property type="match status" value="1"/>
</dbReference>
<dbReference type="CDD" id="cd03244">
    <property type="entry name" value="ABCC_MRP_domain2"/>
    <property type="match status" value="1"/>
</dbReference>
<dbReference type="FunFam" id="1.20.1560.10:FF:000003">
    <property type="entry name" value="ABC transporter C family member 10"/>
    <property type="match status" value="1"/>
</dbReference>
<dbReference type="FunFam" id="3.40.50.300:FF:000169">
    <property type="entry name" value="ABC transporter C family member 3"/>
    <property type="match status" value="1"/>
</dbReference>
<dbReference type="FunFam" id="1.20.1560.10:FF:000002">
    <property type="entry name" value="ABC transporter C family member 5"/>
    <property type="match status" value="1"/>
</dbReference>
<dbReference type="FunFam" id="3.40.50.300:FF:000508">
    <property type="entry name" value="ABC transporter C family member 5"/>
    <property type="match status" value="1"/>
</dbReference>
<dbReference type="Gene3D" id="1.20.1560.10">
    <property type="entry name" value="ABC transporter type 1, transmembrane domain"/>
    <property type="match status" value="2"/>
</dbReference>
<dbReference type="Gene3D" id="3.40.50.300">
    <property type="entry name" value="P-loop containing nucleotide triphosphate hydrolases"/>
    <property type="match status" value="2"/>
</dbReference>
<dbReference type="InterPro" id="IPR003593">
    <property type="entry name" value="AAA+_ATPase"/>
</dbReference>
<dbReference type="InterPro" id="IPR011527">
    <property type="entry name" value="ABC1_TM_dom"/>
</dbReference>
<dbReference type="InterPro" id="IPR036640">
    <property type="entry name" value="ABC1_TM_sf"/>
</dbReference>
<dbReference type="InterPro" id="IPR003439">
    <property type="entry name" value="ABC_transporter-like_ATP-bd"/>
</dbReference>
<dbReference type="InterPro" id="IPR017871">
    <property type="entry name" value="ABC_transporter-like_CS"/>
</dbReference>
<dbReference type="InterPro" id="IPR050173">
    <property type="entry name" value="ABC_transporter_C-like"/>
</dbReference>
<dbReference type="InterPro" id="IPR044746">
    <property type="entry name" value="ABCC_6TM_D1"/>
</dbReference>
<dbReference type="InterPro" id="IPR044726">
    <property type="entry name" value="ABCC_6TM_D2"/>
</dbReference>
<dbReference type="InterPro" id="IPR027417">
    <property type="entry name" value="P-loop_NTPase"/>
</dbReference>
<dbReference type="PANTHER" id="PTHR24223:SF364">
    <property type="entry name" value="ABC TRANSPORTER C FAMILY MEMBER 6"/>
    <property type="match status" value="1"/>
</dbReference>
<dbReference type="PANTHER" id="PTHR24223">
    <property type="entry name" value="ATP-BINDING CASSETTE SUB-FAMILY C"/>
    <property type="match status" value="1"/>
</dbReference>
<dbReference type="Pfam" id="PF00664">
    <property type="entry name" value="ABC_membrane"/>
    <property type="match status" value="2"/>
</dbReference>
<dbReference type="Pfam" id="PF00005">
    <property type="entry name" value="ABC_tran"/>
    <property type="match status" value="2"/>
</dbReference>
<dbReference type="SMART" id="SM00382">
    <property type="entry name" value="AAA"/>
    <property type="match status" value="2"/>
</dbReference>
<dbReference type="SUPFAM" id="SSF90123">
    <property type="entry name" value="ABC transporter transmembrane region"/>
    <property type="match status" value="2"/>
</dbReference>
<dbReference type="SUPFAM" id="SSF52540">
    <property type="entry name" value="P-loop containing nucleoside triphosphate hydrolases"/>
    <property type="match status" value="2"/>
</dbReference>
<dbReference type="PROSITE" id="PS50929">
    <property type="entry name" value="ABC_TM1F"/>
    <property type="match status" value="2"/>
</dbReference>
<dbReference type="PROSITE" id="PS00211">
    <property type="entry name" value="ABC_TRANSPORTER_1"/>
    <property type="match status" value="1"/>
</dbReference>
<dbReference type="PROSITE" id="PS50893">
    <property type="entry name" value="ABC_TRANSPORTER_2"/>
    <property type="match status" value="2"/>
</dbReference>
<proteinExistence type="evidence at transcript level"/>
<feature type="chain" id="PRO_0000226079" description="ABC transporter C family member 6">
    <location>
        <begin position="1"/>
        <end position="1466"/>
    </location>
</feature>
<feature type="transmembrane region" description="Helical" evidence="3">
    <location>
        <begin position="16"/>
        <end position="36"/>
    </location>
</feature>
<feature type="transmembrane region" description="Helical" evidence="3">
    <location>
        <begin position="63"/>
        <end position="83"/>
    </location>
</feature>
<feature type="transmembrane region" description="Helical" evidence="3">
    <location>
        <begin position="91"/>
        <end position="111"/>
    </location>
</feature>
<feature type="transmembrane region" description="Helical" evidence="3">
    <location>
        <begin position="128"/>
        <end position="148"/>
    </location>
</feature>
<feature type="transmembrane region" description="Helical" evidence="3">
    <location>
        <begin position="158"/>
        <end position="178"/>
    </location>
</feature>
<feature type="transmembrane region" description="Helical" evidence="3">
    <location>
        <begin position="286"/>
        <end position="306"/>
    </location>
</feature>
<feature type="transmembrane region" description="Helical" evidence="3">
    <location>
        <begin position="322"/>
        <end position="339"/>
    </location>
</feature>
<feature type="transmembrane region" description="Helical" evidence="3">
    <location>
        <begin position="400"/>
        <end position="420"/>
    </location>
</feature>
<feature type="transmembrane region" description="Helical" evidence="3">
    <location>
        <begin position="425"/>
        <end position="445"/>
    </location>
</feature>
<feature type="transmembrane region" description="Helical" evidence="3">
    <location>
        <begin position="512"/>
        <end position="532"/>
    </location>
</feature>
<feature type="transmembrane region" description="Helical" evidence="3">
    <location>
        <begin position="890"/>
        <end position="910"/>
    </location>
</feature>
<feature type="transmembrane region" description="Helical" evidence="3">
    <location>
        <begin position="937"/>
        <end position="957"/>
    </location>
</feature>
<feature type="transmembrane region" description="Helical" evidence="3">
    <location>
        <begin position="1026"/>
        <end position="1046"/>
    </location>
</feature>
<feature type="domain" description="ABC transmembrane type-1 1" evidence="3">
    <location>
        <begin position="286"/>
        <end position="567"/>
    </location>
</feature>
<feature type="domain" description="ABC transporter 1" evidence="2">
    <location>
        <begin position="601"/>
        <end position="824"/>
    </location>
</feature>
<feature type="domain" description="ABC transmembrane type-1 2" evidence="3">
    <location>
        <begin position="900"/>
        <end position="1182"/>
    </location>
</feature>
<feature type="domain" description="ABC transporter 2" evidence="2">
    <location>
        <begin position="1219"/>
        <end position="1453"/>
    </location>
</feature>
<feature type="region of interest" description="Disordered" evidence="4">
    <location>
        <begin position="840"/>
        <end position="876"/>
    </location>
</feature>
<feature type="compositionally biased region" description="Basic and acidic residues" evidence="4">
    <location>
        <begin position="844"/>
        <end position="863"/>
    </location>
</feature>
<feature type="binding site" evidence="2">
    <location>
        <begin position="636"/>
        <end position="643"/>
    </location>
    <ligand>
        <name>ATP</name>
        <dbReference type="ChEBI" id="CHEBI:30616"/>
        <label>1</label>
    </ligand>
</feature>
<feature type="binding site" evidence="2">
    <location>
        <begin position="1253"/>
        <end position="1260"/>
    </location>
    <ligand>
        <name>ATP</name>
        <dbReference type="ChEBI" id="CHEBI:30616"/>
        <label>2</label>
    </ligand>
</feature>
<feature type="sequence conflict" description="In Ref. 1; AAL14776." evidence="6" ref="1">
    <original>L</original>
    <variation>V</variation>
    <location>
        <position position="243"/>
    </location>
</feature>
<feature type="sequence conflict" description="In Ref. 1; AAL14776." evidence="6" ref="1">
    <original>D</original>
    <variation>E</variation>
    <location>
        <position position="612"/>
    </location>
</feature>
<feature type="sequence conflict" description="In Ref. 1; AAL14776." evidence="6" ref="1">
    <original>H</original>
    <variation>N</variation>
    <location>
        <position position="809"/>
    </location>
</feature>
<feature type="sequence conflict" description="In Ref. 1; AAL14776." evidence="6" ref="1">
    <original>L</original>
    <variation>I</variation>
    <location>
        <position position="853"/>
    </location>
</feature>
<feature type="sequence conflict" description="In Ref. 1; AAL14776." evidence="6" ref="1">
    <original>L</original>
    <variation>F</variation>
    <location>
        <position position="1451"/>
    </location>
</feature>
<reference key="1">
    <citation type="submission" date="2001-08" db="EMBL/GenBank/DDBJ databases">
        <title>AtMRP6, a full size ABC transporter from the multidrug resistance protein subfamily.</title>
        <authorList>
            <person name="Forestier C."/>
        </authorList>
    </citation>
    <scope>NUCLEOTIDE SEQUENCE [MRNA]</scope>
</reference>
<reference key="2">
    <citation type="journal article" date="2000" name="DNA Res.">
        <title>Structural analysis of Arabidopsis thaliana chromosome 3. II. Sequence features of the 4,251,695 bp regions covered by 90 P1, TAC and BAC clones.</title>
        <authorList>
            <person name="Kaneko T."/>
            <person name="Katoh T."/>
            <person name="Sato S."/>
            <person name="Nakamura Y."/>
            <person name="Asamizu E."/>
            <person name="Tabata S."/>
        </authorList>
    </citation>
    <scope>NUCLEOTIDE SEQUENCE [LARGE SCALE GENOMIC DNA] OF 1-1441</scope>
    <source>
        <strain>cv. Columbia</strain>
    </source>
</reference>
<reference key="3">
    <citation type="journal article" date="2017" name="Plant J.">
        <title>Araport11: a complete reannotation of the Arabidopsis thaliana reference genome.</title>
        <authorList>
            <person name="Cheng C.Y."/>
            <person name="Krishnakumar V."/>
            <person name="Chan A.P."/>
            <person name="Thibaud-Nissen F."/>
            <person name="Schobel S."/>
            <person name="Town C.D."/>
        </authorList>
    </citation>
    <scope>GENOME REANNOTATION</scope>
    <source>
        <strain>cv. Columbia</strain>
    </source>
</reference>
<reference key="4">
    <citation type="journal article" date="2001" name="J. Biol. Chem.">
        <title>The Arabidopsis thaliana ABC protein superfamily, a complete inventory.</title>
        <authorList>
            <person name="Sanchez-Fernandez R."/>
            <person name="Davies T.G."/>
            <person name="Coleman J.O."/>
            <person name="Rea P.A."/>
        </authorList>
    </citation>
    <scope>GENE FAMILY</scope>
    <scope>NOMENCLATURE</scope>
</reference>
<reference key="5">
    <citation type="journal article" date="2002" name="Planta">
        <title>Multifunctionality of plant ABC transporters -- more than just detoxifiers.</title>
        <authorList>
            <person name="Martinoia E."/>
            <person name="Klein M."/>
            <person name="Geisler M."/>
            <person name="Bovet L."/>
            <person name="Forestier C."/>
            <person name="Kolukisaoglu H.U."/>
            <person name="Mueller-Roeber B."/>
            <person name="Schulz B."/>
        </authorList>
    </citation>
    <scope>GENE FAMILY</scope>
</reference>
<reference key="6">
    <citation type="journal article" date="2002" name="Planta">
        <title>Family business: the multidrug-resistance related protein (MRP) ABC transporter genes in Arabidopsis thaliana.</title>
        <authorList>
            <person name="Kolukisaoglu U.H."/>
            <person name="Bovet L."/>
            <person name="Klein M."/>
            <person name="Eggmann T."/>
            <person name="Geisler M."/>
            <person name="Wanke D."/>
            <person name="Martinoia E."/>
            <person name="Schulz B."/>
        </authorList>
    </citation>
    <scope>TISSUE SPECIFICITY</scope>
    <scope>INDUCTION</scope>
</reference>
<reference key="7">
    <citation type="journal article" date="2008" name="Trends Plant Sci.">
        <title>Plant ABC proteins - a unified nomenclature and updated inventory.</title>
        <authorList>
            <person name="Verrier P.J."/>
            <person name="Bird D."/>
            <person name="Burla B."/>
            <person name="Dassa E."/>
            <person name="Forestier C."/>
            <person name="Geisler M."/>
            <person name="Klein M."/>
            <person name="Kolukisaoglu H.U."/>
            <person name="Lee Y."/>
            <person name="Martinoia E."/>
            <person name="Murphy A."/>
            <person name="Rea P.A."/>
            <person name="Samuels L."/>
            <person name="Schulz B."/>
            <person name="Spalding E.J."/>
            <person name="Yazaki K."/>
            <person name="Theodoulou F.L."/>
        </authorList>
    </citation>
    <scope>GENE FAMILY</scope>
    <scope>NOMENCLATURE</scope>
</reference>
<evidence type="ECO:0000250" key="1"/>
<evidence type="ECO:0000255" key="2">
    <source>
        <dbReference type="PROSITE-ProRule" id="PRU00434"/>
    </source>
</evidence>
<evidence type="ECO:0000255" key="3">
    <source>
        <dbReference type="PROSITE-ProRule" id="PRU00441"/>
    </source>
</evidence>
<evidence type="ECO:0000256" key="4">
    <source>
        <dbReference type="SAM" id="MobiDB-lite"/>
    </source>
</evidence>
<evidence type="ECO:0000269" key="5">
    <source>
    </source>
</evidence>
<evidence type="ECO:0000305" key="6"/>